<keyword id="KW-0963">Cytoplasm</keyword>
<keyword id="KW-1185">Reference proteome</keyword>
<comment type="function">
    <text evidence="1">Required for morphogenesis under gluconeogenic growth conditions.</text>
</comment>
<comment type="subcellular location">
    <subcellularLocation>
        <location evidence="1">Cytoplasm</location>
    </subcellularLocation>
</comment>
<comment type="similarity">
    <text evidence="1">Belongs to the gluconeogenesis factor family.</text>
</comment>
<organism>
    <name type="scientific">Yersinia pestis</name>
    <dbReference type="NCBI Taxonomy" id="632"/>
    <lineage>
        <taxon>Bacteria</taxon>
        <taxon>Pseudomonadati</taxon>
        <taxon>Pseudomonadota</taxon>
        <taxon>Gammaproteobacteria</taxon>
        <taxon>Enterobacterales</taxon>
        <taxon>Yersiniaceae</taxon>
        <taxon>Yersinia</taxon>
    </lineage>
</organism>
<evidence type="ECO:0000255" key="1">
    <source>
        <dbReference type="HAMAP-Rule" id="MF_00973"/>
    </source>
</evidence>
<feature type="chain" id="PRO_0000107822" description="Putative gluconeogenesis factor">
    <location>
        <begin position="1"/>
        <end position="307"/>
    </location>
</feature>
<sequence>MRNRTLADLERVVALGGGHGLGRVMSSLSSLGSRLTGIVTTTDNGGSTGRIRRSEGGIAWGDTRNCLNQLITEPSVASAMFEYRFTGNGELAGHNLGNLMLKALDHLSIRPIEAINLVRSLLKVDALLIPMSEQPVDLMAIDHEGHPIYGEVNIDQLAQMPQEMLLSPPVHATREAVEAINQADVILIGPGSFLTSLMPLLLLDELTQALRRSSASMIYIGNLGRELSPAAAALSLQDKLTIMESKIGRKIIDAVIVSPTIDISGVKDRIIVQQPLEAKDIPHRHDRELLRQALENTLQQLNGADSV</sequence>
<dbReference type="EMBL" id="AL590842">
    <property type="protein sequence ID" value="CAL19822.1"/>
    <property type="molecule type" value="Genomic_DNA"/>
</dbReference>
<dbReference type="EMBL" id="AE009952">
    <property type="protein sequence ID" value="AAM86575.1"/>
    <property type="molecule type" value="Genomic_DNA"/>
</dbReference>
<dbReference type="EMBL" id="AE017042">
    <property type="protein sequence ID" value="AAS61252.1"/>
    <property type="molecule type" value="Genomic_DNA"/>
</dbReference>
<dbReference type="PIR" id="AD0142">
    <property type="entry name" value="AD0142"/>
</dbReference>
<dbReference type="RefSeq" id="YP_002346197.1">
    <property type="nucleotide sequence ID" value="NC_003143.1"/>
</dbReference>
<dbReference type="SMR" id="P58589"/>
<dbReference type="STRING" id="214092.YPO1158"/>
<dbReference type="PaxDb" id="214092-YPO1158"/>
<dbReference type="DNASU" id="1147971"/>
<dbReference type="EnsemblBacteria" id="AAS61252">
    <property type="protein sequence ID" value="AAS61252"/>
    <property type="gene ID" value="YP_1001"/>
</dbReference>
<dbReference type="KEGG" id="ype:YPO1158"/>
<dbReference type="KEGG" id="ypk:y3024"/>
<dbReference type="KEGG" id="ypm:YP_1001"/>
<dbReference type="PATRIC" id="fig|214092.21.peg.1454"/>
<dbReference type="eggNOG" id="COG0391">
    <property type="taxonomic scope" value="Bacteria"/>
</dbReference>
<dbReference type="HOGENOM" id="CLU_044041_2_0_6"/>
<dbReference type="OMA" id="LCGDDDW"/>
<dbReference type="OrthoDB" id="9783842at2"/>
<dbReference type="Proteomes" id="UP000000815">
    <property type="component" value="Chromosome"/>
</dbReference>
<dbReference type="Proteomes" id="UP000001019">
    <property type="component" value="Chromosome"/>
</dbReference>
<dbReference type="Proteomes" id="UP000002490">
    <property type="component" value="Chromosome"/>
</dbReference>
<dbReference type="GO" id="GO:0005737">
    <property type="term" value="C:cytoplasm"/>
    <property type="evidence" value="ECO:0007669"/>
    <property type="project" value="UniProtKB-SubCell"/>
</dbReference>
<dbReference type="GO" id="GO:0043743">
    <property type="term" value="F:LPPG:FO 2-phospho-L-lactate transferase activity"/>
    <property type="evidence" value="ECO:0007669"/>
    <property type="project" value="InterPro"/>
</dbReference>
<dbReference type="GO" id="GO:0008360">
    <property type="term" value="P:regulation of cell shape"/>
    <property type="evidence" value="ECO:0007669"/>
    <property type="project" value="UniProtKB-UniRule"/>
</dbReference>
<dbReference type="CDD" id="cd07187">
    <property type="entry name" value="YvcK_like"/>
    <property type="match status" value="1"/>
</dbReference>
<dbReference type="Gene3D" id="3.40.50.10680">
    <property type="entry name" value="CofD-like domains"/>
    <property type="match status" value="1"/>
</dbReference>
<dbReference type="HAMAP" id="MF_00973">
    <property type="entry name" value="Gluconeogen_factor"/>
    <property type="match status" value="1"/>
</dbReference>
<dbReference type="InterPro" id="IPR002882">
    <property type="entry name" value="CofD"/>
</dbReference>
<dbReference type="InterPro" id="IPR038136">
    <property type="entry name" value="CofD-like_dom_sf"/>
</dbReference>
<dbReference type="InterPro" id="IPR010119">
    <property type="entry name" value="Gluconeogen_factor"/>
</dbReference>
<dbReference type="NCBIfam" id="TIGR01826">
    <property type="entry name" value="CofD_related"/>
    <property type="match status" value="1"/>
</dbReference>
<dbReference type="PANTHER" id="PTHR30135:SF3">
    <property type="entry name" value="GLUCONEOGENESIS FACTOR-RELATED"/>
    <property type="match status" value="1"/>
</dbReference>
<dbReference type="PANTHER" id="PTHR30135">
    <property type="entry name" value="UNCHARACTERIZED PROTEIN YVCK-RELATED"/>
    <property type="match status" value="1"/>
</dbReference>
<dbReference type="Pfam" id="PF01933">
    <property type="entry name" value="CofD"/>
    <property type="match status" value="1"/>
</dbReference>
<dbReference type="SUPFAM" id="SSF142338">
    <property type="entry name" value="CofD-like"/>
    <property type="match status" value="1"/>
</dbReference>
<reference key="1">
    <citation type="journal article" date="2001" name="Nature">
        <title>Genome sequence of Yersinia pestis, the causative agent of plague.</title>
        <authorList>
            <person name="Parkhill J."/>
            <person name="Wren B.W."/>
            <person name="Thomson N.R."/>
            <person name="Titball R.W."/>
            <person name="Holden M.T.G."/>
            <person name="Prentice M.B."/>
            <person name="Sebaihia M."/>
            <person name="James K.D."/>
            <person name="Churcher C.M."/>
            <person name="Mungall K.L."/>
            <person name="Baker S."/>
            <person name="Basham D."/>
            <person name="Bentley S.D."/>
            <person name="Brooks K."/>
            <person name="Cerdeno-Tarraga A.-M."/>
            <person name="Chillingworth T."/>
            <person name="Cronin A."/>
            <person name="Davies R.M."/>
            <person name="Davis P."/>
            <person name="Dougan G."/>
            <person name="Feltwell T."/>
            <person name="Hamlin N."/>
            <person name="Holroyd S."/>
            <person name="Jagels K."/>
            <person name="Karlyshev A.V."/>
            <person name="Leather S."/>
            <person name="Moule S."/>
            <person name="Oyston P.C.F."/>
            <person name="Quail M.A."/>
            <person name="Rutherford K.M."/>
            <person name="Simmonds M."/>
            <person name="Skelton J."/>
            <person name="Stevens K."/>
            <person name="Whitehead S."/>
            <person name="Barrell B.G."/>
        </authorList>
    </citation>
    <scope>NUCLEOTIDE SEQUENCE [LARGE SCALE GENOMIC DNA]</scope>
    <source>
        <strain>CO-92 / Biovar Orientalis</strain>
    </source>
</reference>
<reference key="2">
    <citation type="journal article" date="2002" name="J. Bacteriol.">
        <title>Genome sequence of Yersinia pestis KIM.</title>
        <authorList>
            <person name="Deng W."/>
            <person name="Burland V."/>
            <person name="Plunkett G. III"/>
            <person name="Boutin A."/>
            <person name="Mayhew G.F."/>
            <person name="Liss P."/>
            <person name="Perna N.T."/>
            <person name="Rose D.J."/>
            <person name="Mau B."/>
            <person name="Zhou S."/>
            <person name="Schwartz D.C."/>
            <person name="Fetherston J.D."/>
            <person name="Lindler L.E."/>
            <person name="Brubaker R.R."/>
            <person name="Plano G.V."/>
            <person name="Straley S.C."/>
            <person name="McDonough K.A."/>
            <person name="Nilles M.L."/>
            <person name="Matson J.S."/>
            <person name="Blattner F.R."/>
            <person name="Perry R.D."/>
        </authorList>
    </citation>
    <scope>NUCLEOTIDE SEQUENCE [LARGE SCALE GENOMIC DNA]</scope>
    <source>
        <strain>KIM10+ / Biovar Mediaevalis</strain>
    </source>
</reference>
<reference key="3">
    <citation type="journal article" date="2004" name="DNA Res.">
        <title>Complete genome sequence of Yersinia pestis strain 91001, an isolate avirulent to humans.</title>
        <authorList>
            <person name="Song Y."/>
            <person name="Tong Z."/>
            <person name="Wang J."/>
            <person name="Wang L."/>
            <person name="Guo Z."/>
            <person name="Han Y."/>
            <person name="Zhang J."/>
            <person name="Pei D."/>
            <person name="Zhou D."/>
            <person name="Qin H."/>
            <person name="Pang X."/>
            <person name="Han Y."/>
            <person name="Zhai J."/>
            <person name="Li M."/>
            <person name="Cui B."/>
            <person name="Qi Z."/>
            <person name="Jin L."/>
            <person name="Dai R."/>
            <person name="Chen F."/>
            <person name="Li S."/>
            <person name="Ye C."/>
            <person name="Du Z."/>
            <person name="Lin W."/>
            <person name="Wang J."/>
            <person name="Yu J."/>
            <person name="Yang H."/>
            <person name="Wang J."/>
            <person name="Huang P."/>
            <person name="Yang R."/>
        </authorList>
    </citation>
    <scope>NUCLEOTIDE SEQUENCE [LARGE SCALE GENOMIC DNA]</scope>
    <source>
        <strain>91001 / Biovar Mediaevalis</strain>
    </source>
</reference>
<name>GNGF_YERPE</name>
<gene>
    <name type="ordered locus">YPO1158</name>
    <name type="ordered locus">y3024</name>
    <name type="ordered locus">YP_1001</name>
</gene>
<proteinExistence type="inferred from homology"/>
<protein>
    <recommendedName>
        <fullName evidence="1">Putative gluconeogenesis factor</fullName>
    </recommendedName>
</protein>
<accession>P58589</accession>
<accession>Q0WHP1</accession>